<proteinExistence type="evidence at protein level"/>
<keyword id="KW-0002">3D-structure</keyword>
<keyword id="KW-0007">Acetylation</keyword>
<keyword id="KW-0158">Chromosome</keyword>
<keyword id="KW-0238">DNA-binding</keyword>
<keyword id="KW-0488">Methylation</keyword>
<keyword id="KW-0544">Nucleosome core</keyword>
<keyword id="KW-0539">Nucleus</keyword>
<keyword id="KW-0597">Phosphoprotein</keyword>
<keyword id="KW-1185">Reference proteome</keyword>
<accession>P84040</accession>
<accession>A4V2W8</accession>
<accession>P02307</accession>
<accession>Q4AB71</accession>
<accession>Q4ABE0</accession>
<accession>Q6AWN1</accession>
<accession>Q9VFH7</accession>
<protein>
    <recommendedName>
        <fullName>Histone H4</fullName>
    </recommendedName>
</protein>
<sequence length="103" mass="11381">MTGRGKGGKGLGKGGAKRHRKVLRDNIQGITKPAIRRLARRGGVKRISGLIYEETRGVLKVFLENVIRDAVTYTEHAKRKTVTAMDVVYALKRQGRTLYGFGG</sequence>
<comment type="function">
    <text>Core component of nucleosome. Nucleosomes wrap and compact DNA into chromatin, limiting DNA accessibility to the cellular machineries which require DNA as a template. Histones thereby play a central role in transcription regulation, DNA repair, DNA replication and chromosomal stability. DNA accessibility is regulated via a complex set of post-translational modifications of histones, also called histone code, and nucleosome remodeling.</text>
</comment>
<comment type="subunit">
    <text evidence="7">The nucleosome is a histone octamer containing two molecules each of H2A, H2B, H3 and H4 assembled in one H3-H4 heterotetramer and two H2A-H2B heterodimers. The octamer wraps approximately 147 bp of DNA. Interacts with Nasp; the interaction is probably indirect, mediated by histone H3 (PubMed:36930688).</text>
</comment>
<comment type="interaction">
    <interactant intactId="EBI-185028">
        <id>P84040</id>
    </interactant>
    <interactant intactId="EBI-477430">
        <id>Q92831</id>
        <label>KAT2B</label>
    </interactant>
    <organismsDiffer>true</organismsDiffer>
    <experiments>2</experiments>
</comment>
<comment type="interaction">
    <interactant intactId="EBI-185028">
        <id>P84040</id>
    </interactant>
    <interactant intactId="EBI-7414132">
        <id>O94267</id>
        <label>spt16</label>
    </interactant>
    <organismsDiffer>true</organismsDiffer>
    <experiments>2</experiments>
</comment>
<comment type="subcellular location">
    <subcellularLocation>
        <location>Nucleus</location>
    </subcellularLocation>
    <subcellularLocation>
        <location>Chromosome</location>
    </subcellularLocation>
</comment>
<comment type="PTM">
    <text evidence="3 4 6">Acetylated on Lys-6 (H4K5ac) and Lys-13 (H4K12ac) during prophase I of meiosis. Phosphorylation of H2A 'Thr-119' is a prerequisite for H4 Lys-6 acetylation but not for H4 Lys-13 acetylation (PubMed:16230526, PubMed:18327897). Acetylated on Lys-6 and Lys-13 by the Ada2a-containing (ATAC) histone acetyltransferase complex (PubMed:22796493).</text>
</comment>
<comment type="similarity">
    <text evidence="9">Belongs to the histone H4 family.</text>
</comment>
<reference key="1">
    <citation type="journal article" date="1989" name="Nucleic Acids Res.">
        <title>tRNA derived insertion element in histone gene repeating unit of Drosophila melanogaster.</title>
        <authorList>
            <person name="Matsuo Y."/>
            <person name="Yamazaki T."/>
        </authorList>
    </citation>
    <scope>NUCLEOTIDE SEQUENCE [GENOMIC DNA] (HIS4)</scope>
    <source>
        <strain>AK-194</strain>
    </source>
</reference>
<reference key="2">
    <citation type="journal article" date="1996" name="FEBS Lett.">
        <title>Identification and characterization of the Drosophila histone H4 replacement gene.</title>
        <authorList>
            <person name="Akhmanova A."/>
            <person name="Miedema K."/>
            <person name="Hennig W."/>
        </authorList>
    </citation>
    <scope>NUCLEOTIDE SEQUENCE [GENOMIC DNA / MRNA] (HIS4R)</scope>
    <source>
        <strain>Canton-S</strain>
    </source>
</reference>
<reference key="3">
    <citation type="journal article" date="2000" name="Science">
        <title>The genome sequence of Drosophila melanogaster.</title>
        <authorList>
            <person name="Adams M.D."/>
            <person name="Celniker S.E."/>
            <person name="Holt R.A."/>
            <person name="Evans C.A."/>
            <person name="Gocayne J.D."/>
            <person name="Amanatides P.G."/>
            <person name="Scherer S.E."/>
            <person name="Li P.W."/>
            <person name="Hoskins R.A."/>
            <person name="Galle R.F."/>
            <person name="George R.A."/>
            <person name="Lewis S.E."/>
            <person name="Richards S."/>
            <person name="Ashburner M."/>
            <person name="Henderson S.N."/>
            <person name="Sutton G.G."/>
            <person name="Wortman J.R."/>
            <person name="Yandell M.D."/>
            <person name="Zhang Q."/>
            <person name="Chen L.X."/>
            <person name="Brandon R.C."/>
            <person name="Rogers Y.-H.C."/>
            <person name="Blazej R.G."/>
            <person name="Champe M."/>
            <person name="Pfeiffer B.D."/>
            <person name="Wan K.H."/>
            <person name="Doyle C."/>
            <person name="Baxter E.G."/>
            <person name="Helt G."/>
            <person name="Nelson C.R."/>
            <person name="Miklos G.L.G."/>
            <person name="Abril J.F."/>
            <person name="Agbayani A."/>
            <person name="An H.-J."/>
            <person name="Andrews-Pfannkoch C."/>
            <person name="Baldwin D."/>
            <person name="Ballew R.M."/>
            <person name="Basu A."/>
            <person name="Baxendale J."/>
            <person name="Bayraktaroglu L."/>
            <person name="Beasley E.M."/>
            <person name="Beeson K.Y."/>
            <person name="Benos P.V."/>
            <person name="Berman B.P."/>
            <person name="Bhandari D."/>
            <person name="Bolshakov S."/>
            <person name="Borkova D."/>
            <person name="Botchan M.R."/>
            <person name="Bouck J."/>
            <person name="Brokstein P."/>
            <person name="Brottier P."/>
            <person name="Burtis K.C."/>
            <person name="Busam D.A."/>
            <person name="Butler H."/>
            <person name="Cadieu E."/>
            <person name="Center A."/>
            <person name="Chandra I."/>
            <person name="Cherry J.M."/>
            <person name="Cawley S."/>
            <person name="Dahlke C."/>
            <person name="Davenport L.B."/>
            <person name="Davies P."/>
            <person name="de Pablos B."/>
            <person name="Delcher A."/>
            <person name="Deng Z."/>
            <person name="Mays A.D."/>
            <person name="Dew I."/>
            <person name="Dietz S.M."/>
            <person name="Dodson K."/>
            <person name="Doup L.E."/>
            <person name="Downes M."/>
            <person name="Dugan-Rocha S."/>
            <person name="Dunkov B.C."/>
            <person name="Dunn P."/>
            <person name="Durbin K.J."/>
            <person name="Evangelista C.C."/>
            <person name="Ferraz C."/>
            <person name="Ferriera S."/>
            <person name="Fleischmann W."/>
            <person name="Fosler C."/>
            <person name="Gabrielian A.E."/>
            <person name="Garg N.S."/>
            <person name="Gelbart W.M."/>
            <person name="Glasser K."/>
            <person name="Glodek A."/>
            <person name="Gong F."/>
            <person name="Gorrell J.H."/>
            <person name="Gu Z."/>
            <person name="Guan P."/>
            <person name="Harris M."/>
            <person name="Harris N.L."/>
            <person name="Harvey D.A."/>
            <person name="Heiman T.J."/>
            <person name="Hernandez J.R."/>
            <person name="Houck J."/>
            <person name="Hostin D."/>
            <person name="Houston K.A."/>
            <person name="Howland T.J."/>
            <person name="Wei M.-H."/>
            <person name="Ibegwam C."/>
            <person name="Jalali M."/>
            <person name="Kalush F."/>
            <person name="Karpen G.H."/>
            <person name="Ke Z."/>
            <person name="Kennison J.A."/>
            <person name="Ketchum K.A."/>
            <person name="Kimmel B.E."/>
            <person name="Kodira C.D."/>
            <person name="Kraft C.L."/>
            <person name="Kravitz S."/>
            <person name="Kulp D."/>
            <person name="Lai Z."/>
            <person name="Lasko P."/>
            <person name="Lei Y."/>
            <person name="Levitsky A.A."/>
            <person name="Li J.H."/>
            <person name="Li Z."/>
            <person name="Liang Y."/>
            <person name="Lin X."/>
            <person name="Liu X."/>
            <person name="Mattei B."/>
            <person name="McIntosh T.C."/>
            <person name="McLeod M.P."/>
            <person name="McPherson D."/>
            <person name="Merkulov G."/>
            <person name="Milshina N.V."/>
            <person name="Mobarry C."/>
            <person name="Morris J."/>
            <person name="Moshrefi A."/>
            <person name="Mount S.M."/>
            <person name="Moy M."/>
            <person name="Murphy B."/>
            <person name="Murphy L."/>
            <person name="Muzny D.M."/>
            <person name="Nelson D.L."/>
            <person name="Nelson D.R."/>
            <person name="Nelson K.A."/>
            <person name="Nixon K."/>
            <person name="Nusskern D.R."/>
            <person name="Pacleb J.M."/>
            <person name="Palazzolo M."/>
            <person name="Pittman G.S."/>
            <person name="Pan S."/>
            <person name="Pollard J."/>
            <person name="Puri V."/>
            <person name="Reese M.G."/>
            <person name="Reinert K."/>
            <person name="Remington K."/>
            <person name="Saunders R.D.C."/>
            <person name="Scheeler F."/>
            <person name="Shen H."/>
            <person name="Shue B.C."/>
            <person name="Siden-Kiamos I."/>
            <person name="Simpson M."/>
            <person name="Skupski M.P."/>
            <person name="Smith T.J."/>
            <person name="Spier E."/>
            <person name="Spradling A.C."/>
            <person name="Stapleton M."/>
            <person name="Strong R."/>
            <person name="Sun E."/>
            <person name="Svirskas R."/>
            <person name="Tector C."/>
            <person name="Turner R."/>
            <person name="Venter E."/>
            <person name="Wang A.H."/>
            <person name="Wang X."/>
            <person name="Wang Z.-Y."/>
            <person name="Wassarman D.A."/>
            <person name="Weinstock G.M."/>
            <person name="Weissenbach J."/>
            <person name="Williams S.M."/>
            <person name="Woodage T."/>
            <person name="Worley K.C."/>
            <person name="Wu D."/>
            <person name="Yang S."/>
            <person name="Yao Q.A."/>
            <person name="Ye J."/>
            <person name="Yeh R.-F."/>
            <person name="Zaveri J.S."/>
            <person name="Zhan M."/>
            <person name="Zhang G."/>
            <person name="Zhao Q."/>
            <person name="Zheng L."/>
            <person name="Zheng X.H."/>
            <person name="Zhong F.N."/>
            <person name="Zhong W."/>
            <person name="Zhou X."/>
            <person name="Zhu S.C."/>
            <person name="Zhu X."/>
            <person name="Smith H.O."/>
            <person name="Gibbs R.A."/>
            <person name="Myers E.W."/>
            <person name="Rubin G.M."/>
            <person name="Venter J.C."/>
        </authorList>
    </citation>
    <scope>NUCLEOTIDE SEQUENCE [LARGE SCALE GENOMIC DNA] (HIS4R; HIS4:CG31611; HIS4:CG33869; HIS4:CG33871; HIS4:CG33873; HIS4:CG33875; HIS4:CG33877; HIS4:CG33879; HIS4:CG33881; HIS4:CG33883; HIS4:CG33885; HIS4:CG33887; HIS4:CG33889; HIS4:CG33891; HIS4:CG33893; HIS4:CG33895; HIS4:CG33897; HIS4:CG33899; HIS4:CG33901; HIS4:CG33903; HIS4:CG33905; HIS4:CG33907 AND HIS4:CG33909)</scope>
    <source>
        <strain>Berkeley</strain>
    </source>
</reference>
<reference key="4">
    <citation type="journal article" date="2002" name="Genome Biol.">
        <title>Annotation of the Drosophila melanogaster euchromatic genome: a systematic review.</title>
        <authorList>
            <person name="Misra S."/>
            <person name="Crosby M.A."/>
            <person name="Mungall C.J."/>
            <person name="Matthews B.B."/>
            <person name="Campbell K.S."/>
            <person name="Hradecky P."/>
            <person name="Huang Y."/>
            <person name="Kaminker J.S."/>
            <person name="Millburn G.H."/>
            <person name="Prochnik S.E."/>
            <person name="Smith C.D."/>
            <person name="Tupy J.L."/>
            <person name="Whitfield E.J."/>
            <person name="Bayraktaroglu L."/>
            <person name="Berman B.P."/>
            <person name="Bettencourt B.R."/>
            <person name="Celniker S.E."/>
            <person name="de Grey A.D.N.J."/>
            <person name="Drysdale R.A."/>
            <person name="Harris N.L."/>
            <person name="Richter J."/>
            <person name="Russo S."/>
            <person name="Schroeder A.J."/>
            <person name="Shu S.Q."/>
            <person name="Stapleton M."/>
            <person name="Yamada C."/>
            <person name="Ashburner M."/>
            <person name="Gelbart W.M."/>
            <person name="Rubin G.M."/>
            <person name="Lewis S.E."/>
        </authorList>
    </citation>
    <scope>GENOME REANNOTATION</scope>
    <source>
        <strain>Berkeley</strain>
    </source>
</reference>
<reference key="5">
    <citation type="journal article" date="2002" name="Genome Biol.">
        <title>A Drosophila full-length cDNA resource.</title>
        <authorList>
            <person name="Stapleton M."/>
            <person name="Carlson J.W."/>
            <person name="Brokstein P."/>
            <person name="Yu C."/>
            <person name="Champe M."/>
            <person name="George R.A."/>
            <person name="Guarin H."/>
            <person name="Kronmiller B."/>
            <person name="Pacleb J.M."/>
            <person name="Park S."/>
            <person name="Wan K.H."/>
            <person name="Rubin G.M."/>
            <person name="Celniker S.E."/>
        </authorList>
    </citation>
    <scope>NUCLEOTIDE SEQUENCE [LARGE SCALE MRNA]</scope>
    <source>
        <strain>Berkeley</strain>
        <tissue>Head</tissue>
    </source>
</reference>
<reference key="6">
    <citation type="submission" date="2004-08" db="EMBL/GenBank/DDBJ databases">
        <authorList>
            <person name="Stapleton M."/>
            <person name="Carlson J.W."/>
            <person name="Chavez C."/>
            <person name="Frise E."/>
            <person name="George R.A."/>
            <person name="Pacleb J.M."/>
            <person name="Park S."/>
            <person name="Wan K.H."/>
            <person name="Yu C."/>
            <person name="Rubin G.M."/>
            <person name="Celniker S.E."/>
        </authorList>
    </citation>
    <scope>NUCLEOTIDE SEQUENCE [LARGE SCALE MRNA]</scope>
    <source>
        <strain>Berkeley</strain>
        <tissue>Embryo</tissue>
    </source>
</reference>
<reference key="7">
    <citation type="thesis" date="1979" institute="University of Stanford" country="United States">
        <authorList>
            <person name="Goldberg M.L."/>
        </authorList>
    </citation>
    <scope>NUCLEOTIDE SEQUENCE OF 1-72 (HIS4)</scope>
</reference>
<reference key="8">
    <citation type="journal article" date="2005" name="Genes Dev.">
        <title>A histone code in meiosis: the histone kinase, NHK-1, is required for proper chromosomal architecture in Drosophila oocytes.</title>
        <authorList>
            <person name="Ivanovska I."/>
            <person name="Khandan T."/>
            <person name="Ito T."/>
            <person name="Orr-Weaver T.L."/>
        </authorList>
    </citation>
    <scope>ACETYLATION AT LYS-6 AND LYS-13</scope>
</reference>
<reference key="9">
    <citation type="journal article" date="2008" name="J. Proteome Res.">
        <title>Phosphoproteome analysis of Drosophila melanogaster embryos.</title>
        <authorList>
            <person name="Zhai B."/>
            <person name="Villen J."/>
            <person name="Beausoleil S.A."/>
            <person name="Mintseris J."/>
            <person name="Gygi S.P."/>
        </authorList>
    </citation>
    <scope>PHOSPHORYLATION [LARGE SCALE ANALYSIS] AT THR-81 AND THR-83</scope>
    <scope>IDENTIFICATION BY MASS SPECTROMETRY</scope>
    <source>
        <tissue>Embryo</tissue>
    </source>
</reference>
<reference key="10">
    <citation type="journal article" date="2012" name="FEBS Lett.">
        <title>The C-terminal domains of ADA2 proteins determine selective incorporation into GCN5-containing complexes that target histone H3 or H4 for acetylation.</title>
        <authorList>
            <person name="Vamos E.E."/>
            <person name="Boros I.M."/>
        </authorList>
    </citation>
    <scope>ACETYLATION AT LYS-6 AND LYS-13</scope>
</reference>
<reference key="11">
    <citation type="journal article" date="2012" name="Mol. Cell. Proteomics">
        <title>Lysine succinylation and lysine malonylation in histones.</title>
        <authorList>
            <person name="Xie Z."/>
            <person name="Dai J."/>
            <person name="Dai L."/>
            <person name="Tan M."/>
            <person name="Cheng Z."/>
            <person name="Wu Y."/>
            <person name="Boeke J.D."/>
            <person name="Zhao Y."/>
        </authorList>
    </citation>
    <scope>SUCCINYLATION AT LYS-32; LYS-78; LYS-80 AND LYS-92</scope>
</reference>
<reference key="12">
    <citation type="journal article" date="2023" name="Nature">
        <title>Acetyl-methyllysine marks chromatin at active transcription start sites.</title>
        <authorList>
            <person name="Lu-Culligan W.J."/>
            <person name="Connor L.J."/>
            <person name="Xie Y."/>
            <person name="Ekundayo B.E."/>
            <person name="Rose B.T."/>
            <person name="Machyna M."/>
            <person name="Pintado-Urbanc A.P."/>
            <person name="Zimmer J.T."/>
            <person name="Vock I.W."/>
            <person name="Bhanu N.V."/>
            <person name="King M.C."/>
            <person name="Garcia B.A."/>
            <person name="Bleichert F."/>
            <person name="Simon M.D."/>
        </authorList>
    </citation>
    <scope>ACETYLATION AT LYS-6 AND LYS-13</scope>
    <scope>METHYLATION AT LYS-6 AND LYS-13</scope>
</reference>
<reference key="13">
    <citation type="journal article" date="2023" name="PLoS Genet.">
        <title>The histone chaperone NASP maintains H3-H4 reservoirs in the early Drosophila embryo.</title>
        <authorList>
            <person name="Tirgar R."/>
            <person name="Davies J.P."/>
            <person name="Plate L."/>
            <person name="Nordman J.T."/>
        </authorList>
    </citation>
    <scope>INTERACTION WITH NASP</scope>
</reference>
<organism>
    <name type="scientific">Drosophila melanogaster</name>
    <name type="common">Fruit fly</name>
    <dbReference type="NCBI Taxonomy" id="7227"/>
    <lineage>
        <taxon>Eukaryota</taxon>
        <taxon>Metazoa</taxon>
        <taxon>Ecdysozoa</taxon>
        <taxon>Arthropoda</taxon>
        <taxon>Hexapoda</taxon>
        <taxon>Insecta</taxon>
        <taxon>Pterygota</taxon>
        <taxon>Neoptera</taxon>
        <taxon>Endopterygota</taxon>
        <taxon>Diptera</taxon>
        <taxon>Brachycera</taxon>
        <taxon>Muscomorpha</taxon>
        <taxon>Ephydroidea</taxon>
        <taxon>Drosophilidae</taxon>
        <taxon>Drosophila</taxon>
        <taxon>Sophophora</taxon>
    </lineage>
</organism>
<dbReference type="EMBL" id="X14215">
    <property type="protein sequence ID" value="CAA32435.1"/>
    <property type="molecule type" value="Genomic_DNA"/>
</dbReference>
<dbReference type="EMBL" id="X97437">
    <property type="protein sequence ID" value="CAA66067.1"/>
    <property type="molecule type" value="Genomic_DNA"/>
</dbReference>
<dbReference type="EMBL" id="X97438">
    <property type="protein sequence ID" value="CAA66068.1"/>
    <property type="molecule type" value="mRNA"/>
</dbReference>
<dbReference type="EMBL" id="AE014297">
    <property type="protein sequence ID" value="AAF55080.1"/>
    <property type="molecule type" value="Genomic_DNA"/>
</dbReference>
<dbReference type="EMBL" id="AE014134">
    <property type="protein sequence ID" value="AAN11126.1"/>
    <property type="molecule type" value="Genomic_DNA"/>
</dbReference>
<dbReference type="EMBL" id="AE014297">
    <property type="protein sequence ID" value="AAN13612.1"/>
    <property type="molecule type" value="Genomic_DNA"/>
</dbReference>
<dbReference type="EMBL" id="AE014297">
    <property type="protein sequence ID" value="AAN13613.1"/>
    <property type="molecule type" value="Genomic_DNA"/>
</dbReference>
<dbReference type="EMBL" id="AE014134">
    <property type="protein sequence ID" value="AAZ66480.1"/>
    <property type="molecule type" value="Genomic_DNA"/>
</dbReference>
<dbReference type="EMBL" id="AE014134">
    <property type="protein sequence ID" value="AAZ66484.1"/>
    <property type="molecule type" value="Genomic_DNA"/>
</dbReference>
<dbReference type="EMBL" id="AE014134">
    <property type="protein sequence ID" value="AAZ66489.1"/>
    <property type="molecule type" value="Genomic_DNA"/>
</dbReference>
<dbReference type="EMBL" id="AE014134">
    <property type="protein sequence ID" value="AAZ66493.1"/>
    <property type="molecule type" value="Genomic_DNA"/>
</dbReference>
<dbReference type="EMBL" id="AE014134">
    <property type="protein sequence ID" value="AAZ66498.1"/>
    <property type="molecule type" value="Genomic_DNA"/>
</dbReference>
<dbReference type="EMBL" id="AE014134">
    <property type="protein sequence ID" value="AAZ66503.1"/>
    <property type="molecule type" value="Genomic_DNA"/>
</dbReference>
<dbReference type="EMBL" id="AE014134">
    <property type="protein sequence ID" value="AAZ66508.1"/>
    <property type="molecule type" value="Genomic_DNA"/>
</dbReference>
<dbReference type="EMBL" id="AE014134">
    <property type="protein sequence ID" value="AAZ66513.1"/>
    <property type="molecule type" value="Genomic_DNA"/>
</dbReference>
<dbReference type="EMBL" id="AE014134">
    <property type="protein sequence ID" value="AAZ66518.1"/>
    <property type="molecule type" value="Genomic_DNA"/>
</dbReference>
<dbReference type="EMBL" id="AE014134">
    <property type="protein sequence ID" value="AAZ66523.1"/>
    <property type="molecule type" value="Genomic_DNA"/>
</dbReference>
<dbReference type="EMBL" id="AE014134">
    <property type="protein sequence ID" value="AAZ66528.1"/>
    <property type="molecule type" value="Genomic_DNA"/>
</dbReference>
<dbReference type="EMBL" id="AE014134">
    <property type="protein sequence ID" value="AAZ66533.1"/>
    <property type="molecule type" value="Genomic_DNA"/>
</dbReference>
<dbReference type="EMBL" id="AE014134">
    <property type="protein sequence ID" value="AAZ66538.1"/>
    <property type="molecule type" value="Genomic_DNA"/>
</dbReference>
<dbReference type="EMBL" id="AE014134">
    <property type="protein sequence ID" value="AAZ66543.1"/>
    <property type="molecule type" value="Genomic_DNA"/>
</dbReference>
<dbReference type="EMBL" id="AE014134">
    <property type="protein sequence ID" value="AAZ66548.1"/>
    <property type="molecule type" value="Genomic_DNA"/>
</dbReference>
<dbReference type="EMBL" id="AE014134">
    <property type="protein sequence ID" value="AAZ66553.1"/>
    <property type="molecule type" value="Genomic_DNA"/>
</dbReference>
<dbReference type="EMBL" id="AE014134">
    <property type="protein sequence ID" value="AAZ66558.1"/>
    <property type="molecule type" value="Genomic_DNA"/>
</dbReference>
<dbReference type="EMBL" id="AE014134">
    <property type="protein sequence ID" value="AAZ66563.1"/>
    <property type="molecule type" value="Genomic_DNA"/>
</dbReference>
<dbReference type="EMBL" id="AE014134">
    <property type="protein sequence ID" value="AAZ66568.1"/>
    <property type="molecule type" value="Genomic_DNA"/>
</dbReference>
<dbReference type="EMBL" id="AE014134">
    <property type="protein sequence ID" value="AAZ66573.1"/>
    <property type="molecule type" value="Genomic_DNA"/>
</dbReference>
<dbReference type="EMBL" id="AE014134">
    <property type="protein sequence ID" value="AAZ66578.1"/>
    <property type="molecule type" value="Genomic_DNA"/>
</dbReference>
<dbReference type="EMBL" id="BT001842">
    <property type="protein sequence ID" value="AAN71603.1"/>
    <property type="molecule type" value="mRNA"/>
</dbReference>
<dbReference type="EMBL" id="BT015217">
    <property type="protein sequence ID" value="AAT94446.1"/>
    <property type="molecule type" value="mRNA"/>
</dbReference>
<dbReference type="PIR" id="S10098">
    <property type="entry name" value="HSFF4"/>
</dbReference>
<dbReference type="RefSeq" id="NP_001027284.1">
    <property type="nucleotide sequence ID" value="NM_001032113.2"/>
</dbReference>
<dbReference type="RefSeq" id="NP_001027288.1">
    <property type="nucleotide sequence ID" value="NM_001032117.2"/>
</dbReference>
<dbReference type="RefSeq" id="NP_001027293.1">
    <property type="nucleotide sequence ID" value="NM_001032122.2"/>
</dbReference>
<dbReference type="RefSeq" id="NP_001027297.1">
    <property type="nucleotide sequence ID" value="NM_001032126.2"/>
</dbReference>
<dbReference type="RefSeq" id="NP_001027302.1">
    <property type="nucleotide sequence ID" value="NM_001032131.2"/>
</dbReference>
<dbReference type="RefSeq" id="NP_001027307.1">
    <property type="nucleotide sequence ID" value="NM_001032136.2"/>
</dbReference>
<dbReference type="RefSeq" id="NP_001027312.1">
    <property type="nucleotide sequence ID" value="NM_001032141.2"/>
</dbReference>
<dbReference type="RefSeq" id="NP_001027317.1">
    <property type="nucleotide sequence ID" value="NM_001032146.2"/>
</dbReference>
<dbReference type="RefSeq" id="NP_001027322.1">
    <property type="nucleotide sequence ID" value="NM_001032151.2"/>
</dbReference>
<dbReference type="RefSeq" id="NP_001027327.1">
    <property type="nucleotide sequence ID" value="NM_001032156.2"/>
</dbReference>
<dbReference type="RefSeq" id="NP_001027332.1">
    <property type="nucleotide sequence ID" value="NM_001032161.2"/>
</dbReference>
<dbReference type="RefSeq" id="NP_001027337.1">
    <property type="nucleotide sequence ID" value="NM_001032166.2"/>
</dbReference>
<dbReference type="RefSeq" id="NP_001027342.1">
    <property type="nucleotide sequence ID" value="NM_001032171.2"/>
</dbReference>
<dbReference type="RefSeq" id="NP_001027347.1">
    <property type="nucleotide sequence ID" value="NM_001032176.2"/>
</dbReference>
<dbReference type="RefSeq" id="NP_001027352.1">
    <property type="nucleotide sequence ID" value="NM_001032181.2"/>
</dbReference>
<dbReference type="RefSeq" id="NP_001027357.1">
    <property type="nucleotide sequence ID" value="NM_001032186.2"/>
</dbReference>
<dbReference type="RefSeq" id="NP_001027362.1">
    <property type="nucleotide sequence ID" value="NM_001032191.2"/>
</dbReference>
<dbReference type="RefSeq" id="NP_001027367.1">
    <property type="nucleotide sequence ID" value="NM_001032196.1"/>
</dbReference>
<dbReference type="RefSeq" id="NP_001027372.1">
    <property type="nucleotide sequence ID" value="NM_001032201.1"/>
</dbReference>
<dbReference type="RefSeq" id="NP_001027377.1">
    <property type="nucleotide sequence ID" value="NM_001032206.1"/>
</dbReference>
<dbReference type="RefSeq" id="NP_001027382.1">
    <property type="nucleotide sequence ID" value="NM_001032211.1"/>
</dbReference>
<dbReference type="RefSeq" id="NP_001262576.1">
    <property type="nucleotide sequence ID" value="NM_001275647.1"/>
</dbReference>
<dbReference type="RefSeq" id="NP_524352.1">
    <property type="nucleotide sequence ID" value="NM_079628.4"/>
</dbReference>
<dbReference type="RefSeq" id="NP_724344.1">
    <property type="nucleotide sequence ID" value="NM_165383.3"/>
</dbReference>
<dbReference type="RefSeq" id="NP_731927.1">
    <property type="nucleotide sequence ID" value="NM_169592.3"/>
</dbReference>
<dbReference type="RefSeq" id="NP_731928.1">
    <property type="nucleotide sequence ID" value="NM_169593.3"/>
</dbReference>
<dbReference type="PDB" id="2NQB">
    <property type="method" value="X-ray"/>
    <property type="resolution" value="2.30 A"/>
    <property type="chains" value="B/F=2-103"/>
</dbReference>
<dbReference type="PDB" id="2PYO">
    <property type="method" value="X-ray"/>
    <property type="resolution" value="2.43 A"/>
    <property type="chains" value="B/F=2-103"/>
</dbReference>
<dbReference type="PDB" id="2XYI">
    <property type="method" value="X-ray"/>
    <property type="resolution" value="1.75 A"/>
    <property type="chains" value="B=27-46"/>
</dbReference>
<dbReference type="PDB" id="3C9C">
    <property type="method" value="X-ray"/>
    <property type="resolution" value="3.20 A"/>
    <property type="chains" value="B=16-42"/>
</dbReference>
<dbReference type="PDB" id="4QLC">
    <property type="method" value="X-ray"/>
    <property type="resolution" value="3.50 A"/>
    <property type="chains" value="B/F=2-103"/>
</dbReference>
<dbReference type="PDB" id="4UUZ">
    <property type="method" value="X-ray"/>
    <property type="resolution" value="2.90 A"/>
    <property type="chains" value="B=1-103"/>
</dbReference>
<dbReference type="PDB" id="4X23">
    <property type="method" value="X-ray"/>
    <property type="resolution" value="3.50 A"/>
    <property type="chains" value="B/F/L/P=25-103"/>
</dbReference>
<dbReference type="PDB" id="5WCU">
    <property type="method" value="X-ray"/>
    <property type="resolution" value="5.53 A"/>
    <property type="chains" value="B/F/L/P=22-103"/>
</dbReference>
<dbReference type="PDB" id="6DZT">
    <property type="method" value="EM"/>
    <property type="resolution" value="2.99 A"/>
    <property type="chains" value="B/F=2-103"/>
</dbReference>
<dbReference type="PDB" id="6PWE">
    <property type="method" value="EM"/>
    <property type="resolution" value="3.95 A"/>
    <property type="chains" value="B/F=1-103"/>
</dbReference>
<dbReference type="PDB" id="6PWF">
    <property type="method" value="EM"/>
    <property type="resolution" value="4.07 A"/>
    <property type="chains" value="B/F=1-103"/>
</dbReference>
<dbReference type="PDB" id="6XWS">
    <property type="method" value="X-ray"/>
    <property type="resolution" value="4.36 A"/>
    <property type="chains" value="B=1-103"/>
</dbReference>
<dbReference type="PDB" id="6XWT">
    <property type="method" value="X-ray"/>
    <property type="resolution" value="3.47 A"/>
    <property type="chains" value="B/D=1-103"/>
</dbReference>
<dbReference type="PDB" id="7XYF">
    <property type="method" value="EM"/>
    <property type="resolution" value="3.80 A"/>
    <property type="chains" value="B/F=18-103"/>
</dbReference>
<dbReference type="PDB" id="7XYG">
    <property type="method" value="EM"/>
    <property type="resolution" value="4.20 A"/>
    <property type="chains" value="B/F=1-103"/>
</dbReference>
<dbReference type="PDB" id="8PP6">
    <property type="method" value="EM"/>
    <property type="resolution" value="3.18 A"/>
    <property type="chains" value="B/F=2-103"/>
</dbReference>
<dbReference type="PDB" id="8PP7">
    <property type="method" value="EM"/>
    <property type="resolution" value="2.91 A"/>
    <property type="chains" value="B/F=2-103"/>
</dbReference>
<dbReference type="PDB" id="8UX1">
    <property type="method" value="EM"/>
    <property type="resolution" value="2.50 A"/>
    <property type="chains" value="B/F=2-103"/>
</dbReference>
<dbReference type="PDB" id="9MU4">
    <property type="method" value="EM"/>
    <property type="resolution" value="3.29 A"/>
    <property type="chains" value="b/f=22-103"/>
</dbReference>
<dbReference type="PDB" id="9MU5">
    <property type="method" value="EM"/>
    <property type="resolution" value="6.30 A"/>
    <property type="chains" value="b/f=24-103"/>
</dbReference>
<dbReference type="PDB" id="9MU9">
    <property type="method" value="EM"/>
    <property type="resolution" value="7.80 A"/>
    <property type="chains" value="b/f=24-103"/>
</dbReference>
<dbReference type="PDBsum" id="2NQB"/>
<dbReference type="PDBsum" id="2PYO"/>
<dbReference type="PDBsum" id="2XYI"/>
<dbReference type="PDBsum" id="3C9C"/>
<dbReference type="PDBsum" id="4QLC"/>
<dbReference type="PDBsum" id="4UUZ"/>
<dbReference type="PDBsum" id="4X23"/>
<dbReference type="PDBsum" id="5WCU"/>
<dbReference type="PDBsum" id="6DZT"/>
<dbReference type="PDBsum" id="6PWE"/>
<dbReference type="PDBsum" id="6PWF"/>
<dbReference type="PDBsum" id="6XWS"/>
<dbReference type="PDBsum" id="6XWT"/>
<dbReference type="PDBsum" id="7XYF"/>
<dbReference type="PDBsum" id="7XYG"/>
<dbReference type="PDBsum" id="8PP6"/>
<dbReference type="PDBsum" id="8PP7"/>
<dbReference type="PDBsum" id="8UX1"/>
<dbReference type="PDBsum" id="9MU4"/>
<dbReference type="PDBsum" id="9MU5"/>
<dbReference type="PDBsum" id="9MU9"/>
<dbReference type="EMDB" id="EMD-33520"/>
<dbReference type="EMDB" id="EMD-33521"/>
<dbReference type="EMDB" id="EMD-42685"/>
<dbReference type="EMDB" id="EMD-48619"/>
<dbReference type="EMDB" id="EMD-48620"/>
<dbReference type="EMDB" id="EMD-48626"/>
<dbReference type="EMDB" id="EMD-8938"/>
<dbReference type="SASBDB" id="P84040"/>
<dbReference type="SMR" id="P84040"/>
<dbReference type="BioGRID" id="533693">
    <property type="interactions" value="1"/>
</dbReference>
<dbReference type="BioGRID" id="534263">
    <property type="interactions" value="1"/>
</dbReference>
<dbReference type="BioGRID" id="66847">
    <property type="interactions" value="12"/>
</dbReference>
<dbReference type="BioGRID" id="77139">
    <property type="interactions" value="46"/>
</dbReference>
<dbReference type="DIP" id="DIP-29505N"/>
<dbReference type="FunCoup" id="P84040">
    <property type="interactions" value="1342"/>
</dbReference>
<dbReference type="IntAct" id="P84040">
    <property type="interactions" value="45"/>
</dbReference>
<dbReference type="MINT" id="P84040"/>
<dbReference type="STRING" id="7227.FBpp0082423"/>
<dbReference type="iPTMnet" id="P84040"/>
<dbReference type="PaxDb" id="7227-FBpp0082421"/>
<dbReference type="DNASU" id="3772708"/>
<dbReference type="EnsemblMetazoa" id="FBtr0082962">
    <property type="protein sequence ID" value="FBpp0082421"/>
    <property type="gene ID" value="FBgn0013981"/>
</dbReference>
<dbReference type="EnsemblMetazoa" id="FBtr0082963">
    <property type="protein sequence ID" value="FBpp0082422"/>
    <property type="gene ID" value="FBgn0013981"/>
</dbReference>
<dbReference type="EnsemblMetazoa" id="FBtr0082964">
    <property type="protein sequence ID" value="FBpp0082423"/>
    <property type="gene ID" value="FBgn0013981"/>
</dbReference>
<dbReference type="EnsemblMetazoa" id="FBtr0085926">
    <property type="protein sequence ID" value="FBpp0085280"/>
    <property type="gene ID" value="FBgn0051611"/>
</dbReference>
<dbReference type="EnsemblMetazoa" id="FBtr0091875">
    <property type="protein sequence ID" value="FBpp0091116"/>
    <property type="gene ID" value="FBgn0053871"/>
</dbReference>
<dbReference type="EnsemblMetazoa" id="FBtr0091877">
    <property type="protein sequence ID" value="FBpp0091118"/>
    <property type="gene ID" value="FBgn0053873"/>
</dbReference>
<dbReference type="EnsemblMetazoa" id="FBtr0091879">
    <property type="protein sequence ID" value="FBpp0091120"/>
    <property type="gene ID" value="FBgn0053875"/>
</dbReference>
<dbReference type="EnsemblMetazoa" id="FBtr0091887">
    <property type="protein sequence ID" value="FBpp0091128"/>
    <property type="gene ID" value="FBgn0053883"/>
</dbReference>
<dbReference type="EnsemblMetazoa" id="FBtr0091889">
    <property type="protein sequence ID" value="FBpp0091130"/>
    <property type="gene ID" value="FBgn0053885"/>
</dbReference>
<dbReference type="EnsemblMetazoa" id="FBtr0091891">
    <property type="protein sequence ID" value="FBpp0091132"/>
    <property type="gene ID" value="FBgn0053887"/>
</dbReference>
<dbReference type="EnsemblMetazoa" id="FBtr0091893">
    <property type="protein sequence ID" value="FBpp0091134"/>
    <property type="gene ID" value="FBgn0053889"/>
</dbReference>
<dbReference type="EnsemblMetazoa" id="FBtr0091895">
    <property type="protein sequence ID" value="FBpp0091136"/>
    <property type="gene ID" value="FBgn0053891"/>
</dbReference>
<dbReference type="EnsemblMetazoa" id="FBtr0091897">
    <property type="protein sequence ID" value="FBpp0091138"/>
    <property type="gene ID" value="FBgn0053893"/>
</dbReference>
<dbReference type="EnsemblMetazoa" id="FBtr0091899">
    <property type="protein sequence ID" value="FBpp0091140"/>
    <property type="gene ID" value="FBgn0053895"/>
</dbReference>
<dbReference type="EnsemblMetazoa" id="FBtr0091901">
    <property type="protein sequence ID" value="FBpp0091142"/>
    <property type="gene ID" value="FBgn0053897"/>
</dbReference>
<dbReference type="EnsemblMetazoa" id="FBtr0091903">
    <property type="protein sequence ID" value="FBpp0091144"/>
    <property type="gene ID" value="FBgn0053899"/>
</dbReference>
<dbReference type="EnsemblMetazoa" id="FBtr0091905">
    <property type="protein sequence ID" value="FBpp0091146"/>
    <property type="gene ID" value="FBgn0053901"/>
</dbReference>
<dbReference type="EnsemblMetazoa" id="FBtr0091907">
    <property type="protein sequence ID" value="FBpp0091148"/>
    <property type="gene ID" value="FBgn0053903"/>
</dbReference>
<dbReference type="EnsemblMetazoa" id="FBtr0091909">
    <property type="protein sequence ID" value="FBpp0091150"/>
    <property type="gene ID" value="FBgn0053905"/>
</dbReference>
<dbReference type="EnsemblMetazoa" id="FBtr0091911">
    <property type="protein sequence ID" value="FBpp0091152"/>
    <property type="gene ID" value="FBgn0053907"/>
</dbReference>
<dbReference type="EnsemblMetazoa" id="FBtr0091913">
    <property type="protein sequence ID" value="FBpp0091154"/>
    <property type="gene ID" value="FBgn0053909"/>
</dbReference>
<dbReference type="EnsemblMetazoa" id="FBtr0334029">
    <property type="protein sequence ID" value="FBpp0306146"/>
    <property type="gene ID" value="FBgn0013981"/>
</dbReference>
<dbReference type="GeneID" id="318846"/>
<dbReference type="GeneID" id="3771854"/>
<dbReference type="GeneID" id="3771893"/>
<dbReference type="GeneID" id="3771908"/>
<dbReference type="GeneID" id="3771935"/>
<dbReference type="GeneID" id="3771938"/>
<dbReference type="GeneID" id="3771941"/>
<dbReference type="GeneID" id="3771947"/>
<dbReference type="GeneID" id="3772096"/>
<dbReference type="GeneID" id="3772113"/>
<dbReference type="GeneID" id="3772129"/>
<dbReference type="GeneID" id="3772172"/>
<dbReference type="GeneID" id="3772211"/>
<dbReference type="GeneID" id="3772254"/>
<dbReference type="GeneID" id="3772314"/>
<dbReference type="GeneID" id="3772317"/>
<dbReference type="GeneID" id="3772319"/>
<dbReference type="GeneID" id="3772325"/>
<dbReference type="GeneID" id="3772509"/>
<dbReference type="GeneID" id="3772519"/>
<dbReference type="GeneID" id="3772666"/>
<dbReference type="GeneID" id="3772708"/>
<dbReference type="GeneID" id="41773"/>
<dbReference type="KEGG" id="dme:Dmel_CG31611"/>
<dbReference type="KEGG" id="dme:Dmel_CG3379"/>
<dbReference type="KEGG" id="dme:Dmel_CG33869"/>
<dbReference type="KEGG" id="dme:Dmel_CG33871"/>
<dbReference type="KEGG" id="dme:Dmel_CG33873"/>
<dbReference type="KEGG" id="dme:Dmel_CG33875"/>
<dbReference type="KEGG" id="dme:Dmel_CG33877"/>
<dbReference type="KEGG" id="dme:Dmel_CG33879"/>
<dbReference type="KEGG" id="dme:Dmel_CG33881"/>
<dbReference type="KEGG" id="dme:Dmel_CG33883"/>
<dbReference type="KEGG" id="dme:Dmel_CG33885"/>
<dbReference type="KEGG" id="dme:Dmel_CG33887"/>
<dbReference type="KEGG" id="dme:Dmel_CG33889"/>
<dbReference type="KEGG" id="dme:Dmel_CG33891"/>
<dbReference type="KEGG" id="dme:Dmel_CG33893"/>
<dbReference type="KEGG" id="dme:Dmel_CG33895"/>
<dbReference type="KEGG" id="dme:Dmel_CG33897"/>
<dbReference type="KEGG" id="dme:Dmel_CG33899"/>
<dbReference type="KEGG" id="dme:Dmel_CG33901"/>
<dbReference type="KEGG" id="dme:Dmel_CG33903"/>
<dbReference type="KEGG" id="dme:Dmel_CG33905"/>
<dbReference type="KEGG" id="dme:Dmel_CG33907"/>
<dbReference type="KEGG" id="dme:Dmel_CG33909"/>
<dbReference type="UCSC" id="CG31611-RA">
    <property type="organism name" value="d. melanogaster"/>
</dbReference>
<dbReference type="AGR" id="FB:FBgn0001200"/>
<dbReference type="AGR" id="FB:FBgn0013981"/>
<dbReference type="AGR" id="FB:FBgn0051611"/>
<dbReference type="AGR" id="FB:FBgn0053869"/>
<dbReference type="AGR" id="FB:FBgn0053871"/>
<dbReference type="AGR" id="FB:FBgn0053873"/>
<dbReference type="AGR" id="FB:FBgn0053875"/>
<dbReference type="AGR" id="FB:FBgn0053877"/>
<dbReference type="AGR" id="FB:FBgn0053879"/>
<dbReference type="AGR" id="FB:FBgn0053881"/>
<dbReference type="AGR" id="FB:FBgn0053883"/>
<dbReference type="AGR" id="FB:FBgn0053885"/>
<dbReference type="AGR" id="FB:FBgn0053887"/>
<dbReference type="AGR" id="FB:FBgn0053889"/>
<dbReference type="AGR" id="FB:FBgn0053891"/>
<dbReference type="AGR" id="FB:FBgn0053893"/>
<dbReference type="AGR" id="FB:FBgn0053895"/>
<dbReference type="AGR" id="FB:FBgn0053897"/>
<dbReference type="AGR" id="FB:FBgn0053899"/>
<dbReference type="AGR" id="FB:FBgn0053901"/>
<dbReference type="AGR" id="FB:FBgn0053903"/>
<dbReference type="AGR" id="FB:FBgn0053905"/>
<dbReference type="AGR" id="FB:FBgn0053907"/>
<dbReference type="AGR" id="FB:FBgn0053909"/>
<dbReference type="CTD" id="318846"/>
<dbReference type="CTD" id="3771854"/>
<dbReference type="CTD" id="3771893"/>
<dbReference type="CTD" id="3771908"/>
<dbReference type="CTD" id="3771935"/>
<dbReference type="CTD" id="3771938"/>
<dbReference type="CTD" id="3771941"/>
<dbReference type="CTD" id="3771947"/>
<dbReference type="CTD" id="3772096"/>
<dbReference type="CTD" id="3772113"/>
<dbReference type="CTD" id="3772129"/>
<dbReference type="CTD" id="3772172"/>
<dbReference type="CTD" id="3772211"/>
<dbReference type="CTD" id="3772254"/>
<dbReference type="CTD" id="3772314"/>
<dbReference type="CTD" id="3772317"/>
<dbReference type="CTD" id="3772319"/>
<dbReference type="CTD" id="3772325"/>
<dbReference type="CTD" id="3772509"/>
<dbReference type="CTD" id="3772519"/>
<dbReference type="CTD" id="3772666"/>
<dbReference type="CTD" id="3772708"/>
<dbReference type="CTD" id="41773"/>
<dbReference type="FlyBase" id="FBgn0001200">
    <property type="gene designation" value="His4"/>
</dbReference>
<dbReference type="FlyBase" id="FBgn0051611">
    <property type="gene designation" value="His4:CG31611"/>
</dbReference>
<dbReference type="FlyBase" id="FBgn0053869">
    <property type="gene designation" value="His4:CG33869"/>
</dbReference>
<dbReference type="FlyBase" id="FBgn0053871">
    <property type="gene designation" value="His4:CG33871"/>
</dbReference>
<dbReference type="FlyBase" id="FBgn0053873">
    <property type="gene designation" value="His4:CG33873"/>
</dbReference>
<dbReference type="FlyBase" id="FBgn0053875">
    <property type="gene designation" value="His4:CG33875"/>
</dbReference>
<dbReference type="FlyBase" id="FBgn0053877">
    <property type="gene designation" value="His4:CG33877"/>
</dbReference>
<dbReference type="FlyBase" id="FBgn0053879">
    <property type="gene designation" value="His4:CG33879"/>
</dbReference>
<dbReference type="FlyBase" id="FBgn0053881">
    <property type="gene designation" value="His4:CG33881"/>
</dbReference>
<dbReference type="FlyBase" id="FBgn0053883">
    <property type="gene designation" value="His4:CG33883"/>
</dbReference>
<dbReference type="FlyBase" id="FBgn0053885">
    <property type="gene designation" value="His4:CG33885"/>
</dbReference>
<dbReference type="FlyBase" id="FBgn0053887">
    <property type="gene designation" value="His4:CG33887"/>
</dbReference>
<dbReference type="FlyBase" id="FBgn0053889">
    <property type="gene designation" value="His4:CG33889"/>
</dbReference>
<dbReference type="FlyBase" id="FBgn0053891">
    <property type="gene designation" value="His4:CG33891"/>
</dbReference>
<dbReference type="FlyBase" id="FBgn0053893">
    <property type="gene designation" value="His4:CG33893"/>
</dbReference>
<dbReference type="FlyBase" id="FBgn0053895">
    <property type="gene designation" value="His4:CG33895"/>
</dbReference>
<dbReference type="FlyBase" id="FBgn0053897">
    <property type="gene designation" value="His4:CG33897"/>
</dbReference>
<dbReference type="FlyBase" id="FBgn0053899">
    <property type="gene designation" value="His4:CG33899"/>
</dbReference>
<dbReference type="FlyBase" id="FBgn0053901">
    <property type="gene designation" value="His4:CG33901"/>
</dbReference>
<dbReference type="FlyBase" id="FBgn0053903">
    <property type="gene designation" value="His4:CG33903"/>
</dbReference>
<dbReference type="FlyBase" id="FBgn0053905">
    <property type="gene designation" value="His4:CG33905"/>
</dbReference>
<dbReference type="FlyBase" id="FBgn0053907">
    <property type="gene designation" value="His4:CG33907"/>
</dbReference>
<dbReference type="FlyBase" id="FBgn0053909">
    <property type="gene designation" value="His4:CG33909"/>
</dbReference>
<dbReference type="FlyBase" id="FBgn0013981">
    <property type="gene designation" value="His4r"/>
</dbReference>
<dbReference type="VEuPathDB" id="VectorBase:FBgn0013981"/>
<dbReference type="VEuPathDB" id="VectorBase:FBgn0051611"/>
<dbReference type="VEuPathDB" id="VectorBase:FBgn0053871"/>
<dbReference type="VEuPathDB" id="VectorBase:FBgn0053873"/>
<dbReference type="VEuPathDB" id="VectorBase:FBgn0053875"/>
<dbReference type="VEuPathDB" id="VectorBase:FBgn0053883"/>
<dbReference type="VEuPathDB" id="VectorBase:FBgn0053885"/>
<dbReference type="VEuPathDB" id="VectorBase:FBgn0053887"/>
<dbReference type="VEuPathDB" id="VectorBase:FBgn0053889"/>
<dbReference type="VEuPathDB" id="VectorBase:FBgn0053891"/>
<dbReference type="VEuPathDB" id="VectorBase:FBgn0053893"/>
<dbReference type="VEuPathDB" id="VectorBase:FBgn0053895"/>
<dbReference type="VEuPathDB" id="VectorBase:FBgn0053897"/>
<dbReference type="VEuPathDB" id="VectorBase:FBgn0053899"/>
<dbReference type="VEuPathDB" id="VectorBase:FBgn0053901"/>
<dbReference type="VEuPathDB" id="VectorBase:FBgn0053903"/>
<dbReference type="VEuPathDB" id="VectorBase:FBgn0053905"/>
<dbReference type="VEuPathDB" id="VectorBase:FBgn0053907"/>
<dbReference type="VEuPathDB" id="VectorBase:FBgn0053909"/>
<dbReference type="eggNOG" id="KOG3467">
    <property type="taxonomic scope" value="Eukaryota"/>
</dbReference>
<dbReference type="GeneTree" id="ENSGT01060000248528"/>
<dbReference type="HOGENOM" id="CLU_109117_2_3_1"/>
<dbReference type="InParanoid" id="P84040"/>
<dbReference type="OMA" id="QKEHING"/>
<dbReference type="OrthoDB" id="8179904at2759"/>
<dbReference type="PhylomeDB" id="P84040"/>
<dbReference type="Reactome" id="R-DME-201722">
    <property type="pathway name" value="Formation of the beta-catenin:TCF transactivating complex"/>
</dbReference>
<dbReference type="Reactome" id="R-DME-212300">
    <property type="pathway name" value="PRC2 methylates histones and DNA"/>
</dbReference>
<dbReference type="Reactome" id="R-DME-2299718">
    <property type="pathway name" value="Condensation of Prophase Chromosomes"/>
</dbReference>
<dbReference type="Reactome" id="R-DME-2559580">
    <property type="pathway name" value="Oxidative Stress Induced Senescence"/>
</dbReference>
<dbReference type="Reactome" id="R-DME-2559582">
    <property type="pathway name" value="Senescence-Associated Secretory Phenotype (SASP)"/>
</dbReference>
<dbReference type="Reactome" id="R-DME-3214815">
    <property type="pathway name" value="HDACs deacetylate histones"/>
</dbReference>
<dbReference type="Reactome" id="R-DME-3214841">
    <property type="pathway name" value="PKMTs methylate histone lysines"/>
</dbReference>
<dbReference type="Reactome" id="R-DME-3214842">
    <property type="pathway name" value="HDMs demethylate histones"/>
</dbReference>
<dbReference type="Reactome" id="R-DME-3214847">
    <property type="pathway name" value="HATs acetylate histones"/>
</dbReference>
<dbReference type="Reactome" id="R-DME-3214858">
    <property type="pathway name" value="RMTs methylate histone arginines"/>
</dbReference>
<dbReference type="Reactome" id="R-DME-427359">
    <property type="pathway name" value="SIRT1 negatively regulates rRNA expression"/>
</dbReference>
<dbReference type="Reactome" id="R-DME-427413">
    <property type="pathway name" value="NoRC negatively regulates rRNA expression"/>
</dbReference>
<dbReference type="Reactome" id="R-DME-4551638">
    <property type="pathway name" value="SUMOylation of chromatin organization proteins"/>
</dbReference>
<dbReference type="Reactome" id="R-DME-5578749">
    <property type="pathway name" value="Transcriptional regulation by small RNAs"/>
</dbReference>
<dbReference type="Reactome" id="R-DME-5625886">
    <property type="pathway name" value="Activated PKN1 stimulates transcription of AR (androgen receptor) regulated genes KLK2 and KLK3"/>
</dbReference>
<dbReference type="Reactome" id="R-DME-5693565">
    <property type="pathway name" value="Recruitment and ATM-mediated phosphorylation of repair and signaling proteins at DNA double strand breaks"/>
</dbReference>
<dbReference type="Reactome" id="R-DME-68616">
    <property type="pathway name" value="Assembly of the ORC complex at the origin of replication"/>
</dbReference>
<dbReference type="Reactome" id="R-DME-73772">
    <property type="pathway name" value="RNA Polymerase I Promoter Escape"/>
</dbReference>
<dbReference type="Reactome" id="R-DME-8936459">
    <property type="pathway name" value="RUNX1 regulates genes involved in megakaryocyte differentiation and platelet function"/>
</dbReference>
<dbReference type="Reactome" id="R-DME-9018519">
    <property type="pathway name" value="Estrogen-dependent gene expression"/>
</dbReference>
<dbReference type="Reactome" id="R-DME-9841922">
    <property type="pathway name" value="MLL4 and MLL3 complexes regulate expression of PPARG target genes in adipogenesis and hepatic steatosis"/>
</dbReference>
<dbReference type="Reactome" id="R-DME-9843940">
    <property type="pathway name" value="Regulation of endogenous retroelements by KRAB-ZFP proteins"/>
</dbReference>
<dbReference type="SignaLink" id="P84040"/>
<dbReference type="BioGRID-ORCS" id="41773">
    <property type="hits" value="0 hits in 1 CRISPR screen"/>
</dbReference>
<dbReference type="ChiTaRS" id="His4r">
    <property type="organism name" value="fly"/>
</dbReference>
<dbReference type="EvolutionaryTrace" id="P84040"/>
<dbReference type="PRO" id="PR:P84040"/>
<dbReference type="Proteomes" id="UP000000803">
    <property type="component" value="Chromosome 2L"/>
</dbReference>
<dbReference type="Proteomes" id="UP000000803">
    <property type="component" value="Chromosome 3R"/>
</dbReference>
<dbReference type="Bgee" id="FBgn0013981">
    <property type="expression patterns" value="Expressed in eye disc (Drosophila) and 288 other cell types or tissues"/>
</dbReference>
<dbReference type="ExpressionAtlas" id="P84040">
    <property type="expression patterns" value="baseline and differential"/>
</dbReference>
<dbReference type="GO" id="GO:0005694">
    <property type="term" value="C:chromosome"/>
    <property type="evidence" value="ECO:0000314"/>
    <property type="project" value="FlyBase"/>
</dbReference>
<dbReference type="GO" id="GO:0000228">
    <property type="term" value="C:nuclear chromosome"/>
    <property type="evidence" value="ECO:0000314"/>
    <property type="project" value="FlyBase"/>
</dbReference>
<dbReference type="GO" id="GO:0000786">
    <property type="term" value="C:nucleosome"/>
    <property type="evidence" value="ECO:0000314"/>
    <property type="project" value="UniProtKB"/>
</dbReference>
<dbReference type="GO" id="GO:0035059">
    <property type="term" value="C:RCAF complex"/>
    <property type="evidence" value="ECO:0000314"/>
    <property type="project" value="FlyBase"/>
</dbReference>
<dbReference type="GO" id="GO:0003677">
    <property type="term" value="F:DNA binding"/>
    <property type="evidence" value="ECO:0000314"/>
    <property type="project" value="UniProtKB"/>
</dbReference>
<dbReference type="GO" id="GO:0046982">
    <property type="term" value="F:protein heterodimerization activity"/>
    <property type="evidence" value="ECO:0007669"/>
    <property type="project" value="InterPro"/>
</dbReference>
<dbReference type="GO" id="GO:0030527">
    <property type="term" value="F:structural constituent of chromatin"/>
    <property type="evidence" value="ECO:0007669"/>
    <property type="project" value="InterPro"/>
</dbReference>
<dbReference type="GO" id="GO:0006334">
    <property type="term" value="P:nucleosome assembly"/>
    <property type="evidence" value="ECO:0000314"/>
    <property type="project" value="UniProtKB"/>
</dbReference>
<dbReference type="CDD" id="cd22912">
    <property type="entry name" value="HFD_H4"/>
    <property type="match status" value="1"/>
</dbReference>
<dbReference type="FunFam" id="1.10.20.10:FF:000002">
    <property type="entry name" value="Histone H4"/>
    <property type="match status" value="1"/>
</dbReference>
<dbReference type="Gene3D" id="1.10.20.10">
    <property type="entry name" value="Histone, subunit A"/>
    <property type="match status" value="1"/>
</dbReference>
<dbReference type="InterPro" id="IPR035425">
    <property type="entry name" value="CENP-T/H4_C"/>
</dbReference>
<dbReference type="InterPro" id="IPR009072">
    <property type="entry name" value="Histone-fold"/>
</dbReference>
<dbReference type="InterPro" id="IPR001951">
    <property type="entry name" value="Histone_H4"/>
</dbReference>
<dbReference type="InterPro" id="IPR019809">
    <property type="entry name" value="Histone_H4_CS"/>
</dbReference>
<dbReference type="InterPro" id="IPR004823">
    <property type="entry name" value="TAF_TATA-bd_Histone-like_dom"/>
</dbReference>
<dbReference type="PANTHER" id="PTHR10484">
    <property type="entry name" value="HISTONE H4"/>
    <property type="match status" value="1"/>
</dbReference>
<dbReference type="Pfam" id="PF15511">
    <property type="entry name" value="CENP-T_C"/>
    <property type="match status" value="1"/>
</dbReference>
<dbReference type="PRINTS" id="PR00623">
    <property type="entry name" value="HISTONEH4"/>
</dbReference>
<dbReference type="SMART" id="SM00417">
    <property type="entry name" value="H4"/>
    <property type="match status" value="1"/>
</dbReference>
<dbReference type="SMART" id="SM00803">
    <property type="entry name" value="TAF"/>
    <property type="match status" value="1"/>
</dbReference>
<dbReference type="SUPFAM" id="SSF47113">
    <property type="entry name" value="Histone-fold"/>
    <property type="match status" value="1"/>
</dbReference>
<dbReference type="PROSITE" id="PS00047">
    <property type="entry name" value="HISTONE_H4"/>
    <property type="match status" value="1"/>
</dbReference>
<evidence type="ECO:0000250" key="1"/>
<evidence type="ECO:0000256" key="2">
    <source>
        <dbReference type="SAM" id="MobiDB-lite"/>
    </source>
</evidence>
<evidence type="ECO:0000269" key="3">
    <source>
    </source>
</evidence>
<evidence type="ECO:0000269" key="4">
    <source>
    </source>
</evidence>
<evidence type="ECO:0000269" key="5">
    <source>
    </source>
</evidence>
<evidence type="ECO:0000269" key="6">
    <source>
    </source>
</evidence>
<evidence type="ECO:0000269" key="7">
    <source>
    </source>
</evidence>
<evidence type="ECO:0000269" key="8">
    <source>
    </source>
</evidence>
<evidence type="ECO:0000305" key="9"/>
<evidence type="ECO:0007829" key="10">
    <source>
        <dbReference type="PDB" id="2NQB"/>
    </source>
</evidence>
<evidence type="ECO:0007829" key="11">
    <source>
        <dbReference type="PDB" id="2XYI"/>
    </source>
</evidence>
<evidence type="ECO:0007829" key="12">
    <source>
        <dbReference type="PDB" id="8UX1"/>
    </source>
</evidence>
<gene>
    <name type="primary">His4</name>
    <name type="synonym">H4</name>
</gene>
<gene>
    <name type="primary">His4r</name>
    <name type="synonym">H4r</name>
    <name type="ORF">CG3379</name>
</gene>
<gene>
    <name type="primary">His4:CG31611</name>
    <name type="ORF">CG31611</name>
</gene>
<gene>
    <name type="primary">His4:CG33869</name>
    <name type="ORF">CG33869</name>
</gene>
<gene>
    <name type="primary">His4:CG33871</name>
    <name type="ORF">CG33871</name>
</gene>
<gene>
    <name type="primary">His4:CG33873</name>
    <name type="ORF">CG33873</name>
</gene>
<gene>
    <name type="primary">His4:CG33875</name>
    <name type="ORF">CG33875</name>
</gene>
<gene>
    <name type="primary">His4:CG33877</name>
    <name type="ORF">CG33877</name>
</gene>
<gene>
    <name type="primary">His4:CG33879</name>
    <name type="ORF">CG33879</name>
</gene>
<gene>
    <name type="primary">His4:CG33881</name>
    <name type="ORF">CG33881</name>
</gene>
<gene>
    <name type="primary">His4:CG33883</name>
    <name type="ORF">CG33883</name>
</gene>
<gene>
    <name type="primary">His4:CG33885</name>
    <name type="ORF">CG33885</name>
</gene>
<gene>
    <name type="primary">His4:CG33887</name>
    <name type="ORF">CG33887</name>
</gene>
<gene>
    <name type="primary">His4:CG33889</name>
    <name type="ORF">CG33889</name>
</gene>
<gene>
    <name type="primary">His4:CG33891</name>
    <name type="ORF">CG33891</name>
</gene>
<gene>
    <name type="primary">His4:CG33893</name>
    <name type="ORF">CG33893</name>
</gene>
<gene>
    <name type="primary">His4:CG33895</name>
    <name type="ORF">CG33895</name>
</gene>
<gene>
    <name type="primary">His4:CG33897</name>
    <name type="ORF">CG33897</name>
</gene>
<gene>
    <name type="primary">His4:CG33899</name>
    <name type="ORF">CG33899</name>
</gene>
<gene>
    <name type="primary">His4:CG33901</name>
    <name type="ORF">CG33901</name>
</gene>
<gene>
    <name type="primary">His4:CG33903</name>
    <name type="ORF">CG33903</name>
</gene>
<gene>
    <name type="primary">His4:CG33905</name>
    <name type="ORF">CG33905</name>
</gene>
<gene>
    <name type="primary">His4:CG33907</name>
    <name type="ORF">CG33907</name>
</gene>
<gene>
    <name type="primary">His4:CG33909</name>
    <name type="ORF">CG33909</name>
</gene>
<name>H4_DROME</name>
<feature type="initiator methionine" description="Removed" evidence="1">
    <location>
        <position position="1"/>
    </location>
</feature>
<feature type="chain" id="PRO_0000158305" description="Histone H4">
    <location>
        <begin position="2"/>
        <end position="103"/>
    </location>
</feature>
<feature type="DNA-binding region">
    <location>
        <begin position="17"/>
        <end position="21"/>
    </location>
</feature>
<feature type="region of interest" description="Disordered" evidence="2">
    <location>
        <begin position="1"/>
        <end position="20"/>
    </location>
</feature>
<feature type="compositionally biased region" description="Gly residues" evidence="2">
    <location>
        <begin position="1"/>
        <end position="14"/>
    </location>
</feature>
<feature type="modified residue" description="N6-acetyl-N6-methyllysine; alternate" evidence="8">
    <location>
        <position position="6"/>
    </location>
</feature>
<feature type="modified residue" description="N6-acetyllysine" evidence="3">
    <location>
        <position position="6"/>
    </location>
</feature>
<feature type="modified residue" description="N6-acetyl-N6-methyllysine; alternate" evidence="8">
    <location>
        <position position="13"/>
    </location>
</feature>
<feature type="modified residue" description="N6-acetyllysine" evidence="3">
    <location>
        <position position="13"/>
    </location>
</feature>
<feature type="modified residue" description="N6-succinyllysine" evidence="5">
    <location>
        <position position="32"/>
    </location>
</feature>
<feature type="modified residue" description="N6-succinyllysine" evidence="5">
    <location>
        <position position="78"/>
    </location>
</feature>
<feature type="modified residue" description="N6-succinyllysine" evidence="5">
    <location>
        <position position="80"/>
    </location>
</feature>
<feature type="modified residue" description="Phosphothreonine" evidence="4">
    <location>
        <position position="81"/>
    </location>
</feature>
<feature type="modified residue" description="Phosphothreonine" evidence="4">
    <location>
        <position position="83"/>
    </location>
</feature>
<feature type="modified residue" description="N6-succinyllysine" evidence="5">
    <location>
        <position position="92"/>
    </location>
</feature>
<feature type="helix" evidence="10">
    <location>
        <begin position="26"/>
        <end position="29"/>
    </location>
</feature>
<feature type="helix" evidence="11">
    <location>
        <begin position="32"/>
        <end position="40"/>
    </location>
</feature>
<feature type="strand" evidence="12">
    <location>
        <begin position="45"/>
        <end position="47"/>
    </location>
</feature>
<feature type="helix" evidence="10">
    <location>
        <begin position="51"/>
        <end position="76"/>
    </location>
</feature>
<feature type="strand" evidence="10">
    <location>
        <begin position="80"/>
        <end position="82"/>
    </location>
</feature>
<feature type="helix" evidence="10">
    <location>
        <begin position="84"/>
        <end position="93"/>
    </location>
</feature>
<feature type="strand" evidence="10">
    <location>
        <begin position="98"/>
        <end position="101"/>
    </location>
</feature>